<feature type="chain" id="PRO_1000057148" description="Recombination protein RecR">
    <location>
        <begin position="1"/>
        <end position="199"/>
    </location>
</feature>
<feature type="domain" description="Toprim" evidence="1">
    <location>
        <begin position="81"/>
        <end position="176"/>
    </location>
</feature>
<feature type="zinc finger region" description="C4-type" evidence="1">
    <location>
        <begin position="58"/>
        <end position="73"/>
    </location>
</feature>
<accession>A8MKQ1</accession>
<sequence>MNYYSASISQLIEEFTKLPGIGRKTAQRLAFHVINMPIQDAHNLADAIVKAKENIKYCKVCTNLTDQEVCNICSDERRDPLLICVVEDPRDVVAMERTKEFKGYYHVLHGAISPLEGIGPEDIKIKELLVRLSAQSADEVIIATNPNIEGEATAMYLSKLLKPMGIKVSRIAHGIPVGGDLEYADEVTLTKALEGRREI</sequence>
<protein>
    <recommendedName>
        <fullName evidence="1">Recombination protein RecR</fullName>
    </recommendedName>
</protein>
<name>RECR_ALKOO</name>
<proteinExistence type="inferred from homology"/>
<evidence type="ECO:0000255" key="1">
    <source>
        <dbReference type="HAMAP-Rule" id="MF_00017"/>
    </source>
</evidence>
<comment type="function">
    <text evidence="1">May play a role in DNA repair. It seems to be involved in an RecBC-independent recombinational process of DNA repair. It may act with RecF and RecO.</text>
</comment>
<comment type="similarity">
    <text evidence="1">Belongs to the RecR family.</text>
</comment>
<reference key="1">
    <citation type="submission" date="2007-10" db="EMBL/GenBank/DDBJ databases">
        <title>Complete genome of Alkaliphilus oremlandii OhILAs.</title>
        <authorList>
            <person name="Copeland A."/>
            <person name="Lucas S."/>
            <person name="Lapidus A."/>
            <person name="Barry K."/>
            <person name="Detter J.C."/>
            <person name="Glavina del Rio T."/>
            <person name="Hammon N."/>
            <person name="Israni S."/>
            <person name="Dalin E."/>
            <person name="Tice H."/>
            <person name="Pitluck S."/>
            <person name="Chain P."/>
            <person name="Malfatti S."/>
            <person name="Shin M."/>
            <person name="Vergez L."/>
            <person name="Schmutz J."/>
            <person name="Larimer F."/>
            <person name="Land M."/>
            <person name="Hauser L."/>
            <person name="Kyrpides N."/>
            <person name="Mikhailova N."/>
            <person name="Stolz J.F."/>
            <person name="Dawson A."/>
            <person name="Fisher E."/>
            <person name="Crable B."/>
            <person name="Perera E."/>
            <person name="Lisak J."/>
            <person name="Ranganathan M."/>
            <person name="Basu P."/>
            <person name="Richardson P."/>
        </authorList>
    </citation>
    <scope>NUCLEOTIDE SEQUENCE [LARGE SCALE GENOMIC DNA]</scope>
    <source>
        <strain>OhILAs</strain>
    </source>
</reference>
<gene>
    <name evidence="1" type="primary">recR</name>
    <name type="ordered locus">Clos_2854</name>
</gene>
<keyword id="KW-0227">DNA damage</keyword>
<keyword id="KW-0233">DNA recombination</keyword>
<keyword id="KW-0234">DNA repair</keyword>
<keyword id="KW-0479">Metal-binding</keyword>
<keyword id="KW-1185">Reference proteome</keyword>
<keyword id="KW-0862">Zinc</keyword>
<keyword id="KW-0863">Zinc-finger</keyword>
<organism>
    <name type="scientific">Alkaliphilus oremlandii (strain OhILAs)</name>
    <name type="common">Clostridium oremlandii (strain OhILAs)</name>
    <dbReference type="NCBI Taxonomy" id="350688"/>
    <lineage>
        <taxon>Bacteria</taxon>
        <taxon>Bacillati</taxon>
        <taxon>Bacillota</taxon>
        <taxon>Clostridia</taxon>
        <taxon>Peptostreptococcales</taxon>
        <taxon>Natronincolaceae</taxon>
        <taxon>Alkaliphilus</taxon>
    </lineage>
</organism>
<dbReference type="EMBL" id="CP000853">
    <property type="protein sequence ID" value="ABW20383.1"/>
    <property type="molecule type" value="Genomic_DNA"/>
</dbReference>
<dbReference type="RefSeq" id="WP_012160690.1">
    <property type="nucleotide sequence ID" value="NC_009922.1"/>
</dbReference>
<dbReference type="SMR" id="A8MKQ1"/>
<dbReference type="STRING" id="350688.Clos_2854"/>
<dbReference type="KEGG" id="aoe:Clos_2854"/>
<dbReference type="eggNOG" id="COG0353">
    <property type="taxonomic scope" value="Bacteria"/>
</dbReference>
<dbReference type="HOGENOM" id="CLU_060739_1_0_9"/>
<dbReference type="OrthoDB" id="9802672at2"/>
<dbReference type="Proteomes" id="UP000000269">
    <property type="component" value="Chromosome"/>
</dbReference>
<dbReference type="GO" id="GO:0003677">
    <property type="term" value="F:DNA binding"/>
    <property type="evidence" value="ECO:0007669"/>
    <property type="project" value="UniProtKB-UniRule"/>
</dbReference>
<dbReference type="GO" id="GO:0008270">
    <property type="term" value="F:zinc ion binding"/>
    <property type="evidence" value="ECO:0007669"/>
    <property type="project" value="UniProtKB-KW"/>
</dbReference>
<dbReference type="GO" id="GO:0006310">
    <property type="term" value="P:DNA recombination"/>
    <property type="evidence" value="ECO:0007669"/>
    <property type="project" value="UniProtKB-UniRule"/>
</dbReference>
<dbReference type="GO" id="GO:0006281">
    <property type="term" value="P:DNA repair"/>
    <property type="evidence" value="ECO:0007669"/>
    <property type="project" value="UniProtKB-UniRule"/>
</dbReference>
<dbReference type="CDD" id="cd01025">
    <property type="entry name" value="TOPRIM_recR"/>
    <property type="match status" value="1"/>
</dbReference>
<dbReference type="Gene3D" id="3.30.60.80">
    <property type="match status" value="1"/>
</dbReference>
<dbReference type="Gene3D" id="3.40.1360.10">
    <property type="match status" value="1"/>
</dbReference>
<dbReference type="Gene3D" id="6.10.250.240">
    <property type="match status" value="1"/>
</dbReference>
<dbReference type="Gene3D" id="1.10.8.420">
    <property type="entry name" value="RecR Domain 1"/>
    <property type="match status" value="1"/>
</dbReference>
<dbReference type="HAMAP" id="MF_00017">
    <property type="entry name" value="RecR"/>
    <property type="match status" value="1"/>
</dbReference>
<dbReference type="InterPro" id="IPR000093">
    <property type="entry name" value="DNA_Rcmb_RecR"/>
</dbReference>
<dbReference type="InterPro" id="IPR003583">
    <property type="entry name" value="Hlx-hairpin-Hlx_DNA-bd_motif"/>
</dbReference>
<dbReference type="InterPro" id="IPR023627">
    <property type="entry name" value="Rcmb_RecR"/>
</dbReference>
<dbReference type="InterPro" id="IPR015967">
    <property type="entry name" value="Rcmb_RecR_Znf"/>
</dbReference>
<dbReference type="InterPro" id="IPR006171">
    <property type="entry name" value="TOPRIM_dom"/>
</dbReference>
<dbReference type="InterPro" id="IPR034137">
    <property type="entry name" value="TOPRIM_RecR"/>
</dbReference>
<dbReference type="NCBIfam" id="TIGR00615">
    <property type="entry name" value="recR"/>
    <property type="match status" value="1"/>
</dbReference>
<dbReference type="PANTHER" id="PTHR30446">
    <property type="entry name" value="RECOMBINATION PROTEIN RECR"/>
    <property type="match status" value="1"/>
</dbReference>
<dbReference type="PANTHER" id="PTHR30446:SF0">
    <property type="entry name" value="RECOMBINATION PROTEIN RECR"/>
    <property type="match status" value="1"/>
</dbReference>
<dbReference type="Pfam" id="PF21175">
    <property type="entry name" value="RecR_C"/>
    <property type="match status" value="1"/>
</dbReference>
<dbReference type="Pfam" id="PF21176">
    <property type="entry name" value="RecR_HhH"/>
    <property type="match status" value="1"/>
</dbReference>
<dbReference type="Pfam" id="PF02132">
    <property type="entry name" value="RecR_ZnF"/>
    <property type="match status" value="1"/>
</dbReference>
<dbReference type="Pfam" id="PF13662">
    <property type="entry name" value="Toprim_4"/>
    <property type="match status" value="1"/>
</dbReference>
<dbReference type="SMART" id="SM00278">
    <property type="entry name" value="HhH1"/>
    <property type="match status" value="1"/>
</dbReference>
<dbReference type="SMART" id="SM00493">
    <property type="entry name" value="TOPRIM"/>
    <property type="match status" value="1"/>
</dbReference>
<dbReference type="SUPFAM" id="SSF111304">
    <property type="entry name" value="Recombination protein RecR"/>
    <property type="match status" value="1"/>
</dbReference>
<dbReference type="PROSITE" id="PS01300">
    <property type="entry name" value="RECR"/>
    <property type="match status" value="1"/>
</dbReference>
<dbReference type="PROSITE" id="PS50880">
    <property type="entry name" value="TOPRIM"/>
    <property type="match status" value="1"/>
</dbReference>